<keyword id="KW-0963">Cytoplasm</keyword>
<keyword id="KW-0489">Methyltransferase</keyword>
<keyword id="KW-0949">S-adenosyl-L-methionine</keyword>
<keyword id="KW-0808">Transferase</keyword>
<feature type="chain" id="PRO_0000351868" description="Protein-L-isoaspartate O-methyltransferase">
    <location>
        <begin position="1"/>
        <end position="224"/>
    </location>
</feature>
<feature type="active site" evidence="1">
    <location>
        <position position="63"/>
    </location>
</feature>
<proteinExistence type="inferred from homology"/>
<comment type="function">
    <text evidence="1">Catalyzes the methyl esterification of L-isoaspartyl residues in peptides and proteins that result from spontaneous decomposition of normal L-aspartyl and L-asparaginyl residues. It plays a role in the repair and/or degradation of damaged proteins.</text>
</comment>
<comment type="catalytic activity">
    <reaction evidence="1">
        <text>[protein]-L-isoaspartate + S-adenosyl-L-methionine = [protein]-L-isoaspartate alpha-methyl ester + S-adenosyl-L-homocysteine</text>
        <dbReference type="Rhea" id="RHEA:12705"/>
        <dbReference type="Rhea" id="RHEA-COMP:12143"/>
        <dbReference type="Rhea" id="RHEA-COMP:12144"/>
        <dbReference type="ChEBI" id="CHEBI:57856"/>
        <dbReference type="ChEBI" id="CHEBI:59789"/>
        <dbReference type="ChEBI" id="CHEBI:90596"/>
        <dbReference type="ChEBI" id="CHEBI:90598"/>
        <dbReference type="EC" id="2.1.1.77"/>
    </reaction>
</comment>
<comment type="subcellular location">
    <subcellularLocation>
        <location evidence="1">Cytoplasm</location>
    </subcellularLocation>
</comment>
<comment type="similarity">
    <text evidence="1">Belongs to the methyltransferase superfamily. L-isoaspartyl/D-aspartyl protein methyltransferase family.</text>
</comment>
<evidence type="ECO:0000255" key="1">
    <source>
        <dbReference type="HAMAP-Rule" id="MF_00090"/>
    </source>
</evidence>
<sequence length="224" mass="24685">MSDVWQQQRQRMVDEQLRPRGIHDQRILAAMANVPRHLFVPEALQAQAYSDQALPLTLGQTISQPYIVALMAQELLLNPHEQLLEIGAGSGYAAAVFAELVRKVVTIERHQALAQQTQVRLRNLGYVNIEVVWGDGSLGYPTAAPYHAISIPAATPQLAQTLLSQLHDGGRLVAPIGDAQDQQLIRLQRQGQNWQKTTISNVRFVPLIGAGGWEHAPETTAEGE</sequence>
<reference key="1">
    <citation type="journal article" date="2011" name="Stand. Genomic Sci.">
        <title>Complete genome sequence of the filamentous gliding predatory bacterium Herpetosiphon aurantiacus type strain (114-95(T)).</title>
        <authorList>
            <person name="Kiss H."/>
            <person name="Nett M."/>
            <person name="Domin N."/>
            <person name="Martin K."/>
            <person name="Maresca J.A."/>
            <person name="Copeland A."/>
            <person name="Lapidus A."/>
            <person name="Lucas S."/>
            <person name="Berry K.W."/>
            <person name="Glavina Del Rio T."/>
            <person name="Dalin E."/>
            <person name="Tice H."/>
            <person name="Pitluck S."/>
            <person name="Richardson P."/>
            <person name="Bruce D."/>
            <person name="Goodwin L."/>
            <person name="Han C."/>
            <person name="Detter J.C."/>
            <person name="Schmutz J."/>
            <person name="Brettin T."/>
            <person name="Land M."/>
            <person name="Hauser L."/>
            <person name="Kyrpides N.C."/>
            <person name="Ivanova N."/>
            <person name="Goeker M."/>
            <person name="Woyke T."/>
            <person name="Klenk H.P."/>
            <person name="Bryant D.A."/>
        </authorList>
    </citation>
    <scope>NUCLEOTIDE SEQUENCE [LARGE SCALE GENOMIC DNA]</scope>
    <source>
        <strain>ATCC 23779 / DSM 785 / 114-95</strain>
    </source>
</reference>
<gene>
    <name evidence="1" type="primary">pcm</name>
    <name type="ordered locus">Haur_1925</name>
</gene>
<organism>
    <name type="scientific">Herpetosiphon aurantiacus (strain ATCC 23779 / DSM 785 / 114-95)</name>
    <dbReference type="NCBI Taxonomy" id="316274"/>
    <lineage>
        <taxon>Bacteria</taxon>
        <taxon>Bacillati</taxon>
        <taxon>Chloroflexota</taxon>
        <taxon>Chloroflexia</taxon>
        <taxon>Herpetosiphonales</taxon>
        <taxon>Herpetosiphonaceae</taxon>
        <taxon>Herpetosiphon</taxon>
    </lineage>
</organism>
<name>PIMT_HERA2</name>
<protein>
    <recommendedName>
        <fullName evidence="1">Protein-L-isoaspartate O-methyltransferase</fullName>
        <ecNumber evidence="1">2.1.1.77</ecNumber>
    </recommendedName>
    <alternativeName>
        <fullName evidence="1">L-isoaspartyl protein carboxyl methyltransferase</fullName>
    </alternativeName>
    <alternativeName>
        <fullName evidence="1">Protein L-isoaspartyl methyltransferase</fullName>
    </alternativeName>
    <alternativeName>
        <fullName evidence="1">Protein-beta-aspartate methyltransferase</fullName>
        <shortName evidence="1">PIMT</shortName>
    </alternativeName>
</protein>
<accession>A9AUP1</accession>
<dbReference type="EC" id="2.1.1.77" evidence="1"/>
<dbReference type="EMBL" id="CP000875">
    <property type="protein sequence ID" value="ABX04568.1"/>
    <property type="molecule type" value="Genomic_DNA"/>
</dbReference>
<dbReference type="SMR" id="A9AUP1"/>
<dbReference type="STRING" id="316274.Haur_1925"/>
<dbReference type="KEGG" id="hau:Haur_1925"/>
<dbReference type="eggNOG" id="COG2518">
    <property type="taxonomic scope" value="Bacteria"/>
</dbReference>
<dbReference type="HOGENOM" id="CLU_055432_2_0_0"/>
<dbReference type="InParanoid" id="A9AUP1"/>
<dbReference type="Proteomes" id="UP000000787">
    <property type="component" value="Chromosome"/>
</dbReference>
<dbReference type="GO" id="GO:0005737">
    <property type="term" value="C:cytoplasm"/>
    <property type="evidence" value="ECO:0007669"/>
    <property type="project" value="UniProtKB-SubCell"/>
</dbReference>
<dbReference type="GO" id="GO:0004719">
    <property type="term" value="F:protein-L-isoaspartate (D-aspartate) O-methyltransferase activity"/>
    <property type="evidence" value="ECO:0007669"/>
    <property type="project" value="UniProtKB-UniRule"/>
</dbReference>
<dbReference type="GO" id="GO:0032259">
    <property type="term" value="P:methylation"/>
    <property type="evidence" value="ECO:0007669"/>
    <property type="project" value="UniProtKB-KW"/>
</dbReference>
<dbReference type="GO" id="GO:0036211">
    <property type="term" value="P:protein modification process"/>
    <property type="evidence" value="ECO:0007669"/>
    <property type="project" value="UniProtKB-UniRule"/>
</dbReference>
<dbReference type="GO" id="GO:0030091">
    <property type="term" value="P:protein repair"/>
    <property type="evidence" value="ECO:0007669"/>
    <property type="project" value="UniProtKB-UniRule"/>
</dbReference>
<dbReference type="CDD" id="cd02440">
    <property type="entry name" value="AdoMet_MTases"/>
    <property type="match status" value="1"/>
</dbReference>
<dbReference type="FunFam" id="3.40.50.150:FF:000010">
    <property type="entry name" value="Protein-L-isoaspartate O-methyltransferase"/>
    <property type="match status" value="1"/>
</dbReference>
<dbReference type="Gene3D" id="3.40.50.150">
    <property type="entry name" value="Vaccinia Virus protein VP39"/>
    <property type="match status" value="1"/>
</dbReference>
<dbReference type="HAMAP" id="MF_00090">
    <property type="entry name" value="PIMT"/>
    <property type="match status" value="1"/>
</dbReference>
<dbReference type="InterPro" id="IPR000682">
    <property type="entry name" value="PCMT"/>
</dbReference>
<dbReference type="InterPro" id="IPR029063">
    <property type="entry name" value="SAM-dependent_MTases_sf"/>
</dbReference>
<dbReference type="NCBIfam" id="TIGR00080">
    <property type="entry name" value="pimt"/>
    <property type="match status" value="1"/>
</dbReference>
<dbReference type="NCBIfam" id="NF001453">
    <property type="entry name" value="PRK00312.1"/>
    <property type="match status" value="1"/>
</dbReference>
<dbReference type="PANTHER" id="PTHR11579">
    <property type="entry name" value="PROTEIN-L-ISOASPARTATE O-METHYLTRANSFERASE"/>
    <property type="match status" value="1"/>
</dbReference>
<dbReference type="PANTHER" id="PTHR11579:SF0">
    <property type="entry name" value="PROTEIN-L-ISOASPARTATE(D-ASPARTATE) O-METHYLTRANSFERASE"/>
    <property type="match status" value="1"/>
</dbReference>
<dbReference type="Pfam" id="PF01135">
    <property type="entry name" value="PCMT"/>
    <property type="match status" value="1"/>
</dbReference>
<dbReference type="SUPFAM" id="SSF53335">
    <property type="entry name" value="S-adenosyl-L-methionine-dependent methyltransferases"/>
    <property type="match status" value="1"/>
</dbReference>
<dbReference type="PROSITE" id="PS01279">
    <property type="entry name" value="PCMT"/>
    <property type="match status" value="1"/>
</dbReference>